<dbReference type="EMBL" id="AY422473">
    <property type="protein sequence ID" value="AAR13704.1"/>
    <property type="molecule type" value="mRNA"/>
</dbReference>
<dbReference type="EMBL" id="AL359877">
    <property type="status" value="NOT_ANNOTATED_CDS"/>
    <property type="molecule type" value="Genomic_DNA"/>
</dbReference>
<dbReference type="EMBL" id="AL513423">
    <property type="status" value="NOT_ANNOTATED_CDS"/>
    <property type="molecule type" value="Genomic_DNA"/>
</dbReference>
<dbReference type="EMBL" id="AL592153">
    <property type="status" value="NOT_ANNOTATED_CDS"/>
    <property type="molecule type" value="Genomic_DNA"/>
</dbReference>
<dbReference type="EMBL" id="AL662788">
    <property type="status" value="NOT_ANNOTATED_CDS"/>
    <property type="molecule type" value="Genomic_DNA"/>
</dbReference>
<dbReference type="EMBL" id="AK094506">
    <property type="protein sequence ID" value="BAC04370.1"/>
    <property type="status" value="ALT_INIT"/>
    <property type="molecule type" value="mRNA"/>
</dbReference>
<dbReference type="EMBL" id="AK096586">
    <property type="protein sequence ID" value="BAC04823.1"/>
    <property type="status" value="ALT_INIT"/>
    <property type="molecule type" value="mRNA"/>
</dbReference>
<dbReference type="EMBL" id="AK128581">
    <property type="protein sequence ID" value="BAC87511.1"/>
    <property type="status" value="ALT_INIT"/>
    <property type="molecule type" value="mRNA"/>
</dbReference>
<dbReference type="EMBL" id="BC026063">
    <property type="protein sequence ID" value="AAH26063.2"/>
    <property type="molecule type" value="mRNA"/>
</dbReference>
<dbReference type="EMBL" id="BC064849">
    <property type="protein sequence ID" value="AAH64849.1"/>
    <property type="molecule type" value="mRNA"/>
</dbReference>
<dbReference type="EMBL" id="BC144214">
    <property type="protein sequence ID" value="AAI44215.1"/>
    <property type="molecule type" value="mRNA"/>
</dbReference>
<dbReference type="EMBL" id="BC150600">
    <property type="protein sequence ID" value="AAI50601.1"/>
    <property type="molecule type" value="mRNA"/>
</dbReference>
<dbReference type="CCDS" id="CCDS6481.1">
    <molecule id="Q6TFL3-1"/>
</dbReference>
<dbReference type="RefSeq" id="NP_001342476.1">
    <molecule id="Q6TFL3-4"/>
    <property type="nucleotide sequence ID" value="NM_001355547.1"/>
</dbReference>
<dbReference type="RefSeq" id="NP_775821.2">
    <molecule id="Q6TFL3-1"/>
    <property type="nucleotide sequence ID" value="NM_173550.3"/>
</dbReference>
<dbReference type="RefSeq" id="XP_005251454.1">
    <molecule id="Q6TFL3-4"/>
    <property type="nucleotide sequence ID" value="XM_005251397.3"/>
</dbReference>
<dbReference type="RefSeq" id="XP_005251455.1">
    <molecule id="Q6TFL3-4"/>
    <property type="nucleotide sequence ID" value="XM_005251398.5"/>
</dbReference>
<dbReference type="RefSeq" id="XP_005251456.1">
    <molecule id="Q6TFL3-4"/>
    <property type="nucleotide sequence ID" value="XM_005251399.5"/>
</dbReference>
<dbReference type="RefSeq" id="XP_011516090.1">
    <molecule id="Q6TFL3-4"/>
    <property type="nucleotide sequence ID" value="XM_011517788.3"/>
</dbReference>
<dbReference type="RefSeq" id="XP_047278886.1">
    <molecule id="Q6TFL3-4"/>
    <property type="nucleotide sequence ID" value="XM_047422930.1"/>
</dbReference>
<dbReference type="SMR" id="Q6TFL3"/>
<dbReference type="BioGRID" id="128459">
    <property type="interactions" value="8"/>
</dbReference>
<dbReference type="FunCoup" id="Q6TFL3">
    <property type="interactions" value="600"/>
</dbReference>
<dbReference type="IntAct" id="Q6TFL3">
    <property type="interactions" value="3"/>
</dbReference>
<dbReference type="STRING" id="9606.ENSP00000370077"/>
<dbReference type="GlyGen" id="Q6TFL3">
    <property type="glycosylation" value="1 site, 1 O-linked glycan (1 site)"/>
</dbReference>
<dbReference type="iPTMnet" id="Q6TFL3"/>
<dbReference type="PhosphoSitePlus" id="Q6TFL3"/>
<dbReference type="SwissPalm" id="Q6TFL3"/>
<dbReference type="BioMuta" id="CCDC171"/>
<dbReference type="DMDM" id="71658803"/>
<dbReference type="jPOST" id="Q6TFL3"/>
<dbReference type="MassIVE" id="Q6TFL3"/>
<dbReference type="PaxDb" id="9606-ENSP00000370077"/>
<dbReference type="PeptideAtlas" id="Q6TFL3"/>
<dbReference type="ProteomicsDB" id="67389">
    <molecule id="Q6TFL3-1"/>
</dbReference>
<dbReference type="ProteomicsDB" id="67390">
    <molecule id="Q6TFL3-3"/>
</dbReference>
<dbReference type="ProteomicsDB" id="67391">
    <molecule id="Q6TFL3-4"/>
</dbReference>
<dbReference type="Antibodypedia" id="10105">
    <property type="antibodies" value="56 antibodies from 8 providers"/>
</dbReference>
<dbReference type="DNASU" id="203238"/>
<dbReference type="Ensembl" id="ENST00000380701.8">
    <molecule id="Q6TFL3-1"/>
    <property type="protein sequence ID" value="ENSP00000370077.3"/>
    <property type="gene ID" value="ENSG00000164989.17"/>
</dbReference>
<dbReference type="GeneID" id="203238"/>
<dbReference type="KEGG" id="hsa:203238"/>
<dbReference type="MANE-Select" id="ENST00000380701.8">
    <property type="protein sequence ID" value="ENSP00000370077.3"/>
    <property type="RefSeq nucleotide sequence ID" value="NM_173550.4"/>
    <property type="RefSeq protein sequence ID" value="NP_775821.2"/>
</dbReference>
<dbReference type="UCSC" id="uc003zmd.4">
    <molecule id="Q6TFL3-1"/>
    <property type="organism name" value="human"/>
</dbReference>
<dbReference type="AGR" id="HGNC:29828"/>
<dbReference type="CTD" id="203238"/>
<dbReference type="DisGeNET" id="203238"/>
<dbReference type="GeneCards" id="CCDC171"/>
<dbReference type="HGNC" id="HGNC:29828">
    <property type="gene designation" value="CCDC171"/>
</dbReference>
<dbReference type="HPA" id="ENSG00000164989">
    <property type="expression patterns" value="Tissue enhanced (testis)"/>
</dbReference>
<dbReference type="MalaCards" id="CCDC171"/>
<dbReference type="neXtProt" id="NX_Q6TFL3"/>
<dbReference type="OpenTargets" id="ENSG00000164989"/>
<dbReference type="PharmGKB" id="PA134921892"/>
<dbReference type="VEuPathDB" id="HostDB:ENSG00000164989"/>
<dbReference type="eggNOG" id="ENOG502QT2H">
    <property type="taxonomic scope" value="Eukaryota"/>
</dbReference>
<dbReference type="GeneTree" id="ENSGT00390000007924"/>
<dbReference type="HOGENOM" id="CLU_007506_0_0_1"/>
<dbReference type="InParanoid" id="Q6TFL3"/>
<dbReference type="OMA" id="CRRFECD"/>
<dbReference type="OrthoDB" id="287623at2759"/>
<dbReference type="PAN-GO" id="Q6TFL3">
    <property type="GO annotations" value="0 GO annotations based on evolutionary models"/>
</dbReference>
<dbReference type="PhylomeDB" id="Q6TFL3"/>
<dbReference type="TreeFam" id="TF330625"/>
<dbReference type="PathwayCommons" id="Q6TFL3"/>
<dbReference type="SignaLink" id="Q6TFL3"/>
<dbReference type="BioGRID-ORCS" id="203238">
    <property type="hits" value="7 hits in 1151 CRISPR screens"/>
</dbReference>
<dbReference type="ChiTaRS" id="CCDC171">
    <property type="organism name" value="human"/>
</dbReference>
<dbReference type="GenomeRNAi" id="203238"/>
<dbReference type="Pharos" id="Q6TFL3">
    <property type="development level" value="Tdark"/>
</dbReference>
<dbReference type="PRO" id="PR:Q6TFL3"/>
<dbReference type="Proteomes" id="UP000005640">
    <property type="component" value="Chromosome 9"/>
</dbReference>
<dbReference type="RNAct" id="Q6TFL3">
    <property type="molecule type" value="protein"/>
</dbReference>
<dbReference type="Bgee" id="ENSG00000164989">
    <property type="expression patterns" value="Expressed in male germ line stem cell (sensu Vertebrata) in testis and 115 other cell types or tissues"/>
</dbReference>
<dbReference type="ExpressionAtlas" id="Q6TFL3">
    <property type="expression patterns" value="baseline and differential"/>
</dbReference>
<dbReference type="Gene3D" id="1.10.287.1490">
    <property type="match status" value="1"/>
</dbReference>
<dbReference type="InterPro" id="IPR038820">
    <property type="entry name" value="CCDC171"/>
</dbReference>
<dbReference type="PANTHER" id="PTHR47899">
    <property type="entry name" value="COILED-COIL DOMAIN-CONTAINING PROTEIN 171"/>
    <property type="match status" value="1"/>
</dbReference>
<dbReference type="PANTHER" id="PTHR47899:SF1">
    <property type="entry name" value="COILED-COIL DOMAIN-CONTAINING PROTEIN 171"/>
    <property type="match status" value="1"/>
</dbReference>
<gene>
    <name type="primary">CCDC171</name>
    <name type="synonym">C9orf93</name>
</gene>
<protein>
    <recommendedName>
        <fullName>Coiled-coil domain-containing protein 171</fullName>
    </recommendedName>
</protein>
<organism>
    <name type="scientific">Homo sapiens</name>
    <name type="common">Human</name>
    <dbReference type="NCBI Taxonomy" id="9606"/>
    <lineage>
        <taxon>Eukaryota</taxon>
        <taxon>Metazoa</taxon>
        <taxon>Chordata</taxon>
        <taxon>Craniata</taxon>
        <taxon>Vertebrata</taxon>
        <taxon>Euteleostomi</taxon>
        <taxon>Mammalia</taxon>
        <taxon>Eutheria</taxon>
        <taxon>Euarchontoglires</taxon>
        <taxon>Primates</taxon>
        <taxon>Haplorrhini</taxon>
        <taxon>Catarrhini</taxon>
        <taxon>Hominidae</taxon>
        <taxon>Homo</taxon>
    </lineage>
</organism>
<keyword id="KW-0025">Alternative splicing</keyword>
<keyword id="KW-0175">Coiled coil</keyword>
<keyword id="KW-1267">Proteomics identification</keyword>
<keyword id="KW-1185">Reference proteome</keyword>
<accession>Q6TFL3</accession>
<accession>B7ZM22</accession>
<accession>Q5SU58</accession>
<accession>Q6P1W1</accession>
<accession>Q6ZR13</accession>
<accession>Q8N1Z4</accession>
<accession>Q8N8L3</accession>
<accession>Q8TBR2</accession>
<name>CC171_HUMAN</name>
<feature type="chain" id="PRO_0000089727" description="Coiled-coil domain-containing protein 171">
    <location>
        <begin position="1"/>
        <end position="1326"/>
    </location>
</feature>
<feature type="region of interest" description="Disordered" evidence="2">
    <location>
        <begin position="1306"/>
        <end position="1326"/>
    </location>
</feature>
<feature type="coiled-coil region" evidence="1">
    <location>
        <begin position="53"/>
        <end position="294"/>
    </location>
</feature>
<feature type="coiled-coil region" evidence="1">
    <location>
        <begin position="323"/>
        <end position="391"/>
    </location>
</feature>
<feature type="coiled-coil region" evidence="1">
    <location>
        <begin position="450"/>
        <end position="561"/>
    </location>
</feature>
<feature type="coiled-coil region" evidence="1">
    <location>
        <begin position="597"/>
        <end position="630"/>
    </location>
</feature>
<feature type="coiled-coil region" evidence="1">
    <location>
        <begin position="660"/>
        <end position="707"/>
    </location>
</feature>
<feature type="coiled-coil region" evidence="1">
    <location>
        <begin position="765"/>
        <end position="792"/>
    </location>
</feature>
<feature type="coiled-coil region" evidence="1">
    <location>
        <begin position="979"/>
        <end position="1143"/>
    </location>
</feature>
<feature type="coiled-coil region" evidence="1">
    <location>
        <begin position="1217"/>
        <end position="1241"/>
    </location>
</feature>
<feature type="splice variant" id="VSP_043768" description="In isoform 3." evidence="6">
    <original>E</original>
    <variation>ELNSMNDVK</variation>
    <location>
        <position position="475"/>
    </location>
</feature>
<feature type="splice variant" id="VSP_014445" description="In isoform 2." evidence="5 6">
    <original>AMIKSFMDVYQLASTRIMTLEKEMTSHRS</original>
    <variation>VRVQWCDHSSLQSQMPGLKQSSCLSLLST</variation>
    <location>
        <begin position="1201"/>
        <end position="1229"/>
    </location>
</feature>
<feature type="splice variant" id="VSP_014446" description="In isoform 2." evidence="5 6">
    <location>
        <begin position="1230"/>
        <end position="1326"/>
    </location>
</feature>
<feature type="sequence variant" id="VAR_022803" description="In dbSNP:rs443563." evidence="4">
    <original>I</original>
    <variation>N</variation>
    <location>
        <position position="17"/>
    </location>
</feature>
<feature type="sequence variant" id="VAR_022804" description="In dbSNP:rs4741510.">
    <original>S</original>
    <variation>T</variation>
    <location>
        <position position="121"/>
    </location>
</feature>
<feature type="sequence variant" id="VAR_033685" description="In dbSNP:rs10962127.">
    <original>N</original>
    <variation>I</variation>
    <location>
        <position position="495"/>
    </location>
</feature>
<feature type="sequence variant" id="VAR_050841" description="In dbSNP:rs34816651.">
    <original>C</original>
    <variation>Y</variation>
    <location>
        <position position="821"/>
    </location>
</feature>
<feature type="sequence variant" id="VAR_022805" description="In dbSNP:rs1539172." evidence="3 4">
    <original>K</original>
    <variation>R</variation>
    <location>
        <position position="1069"/>
    </location>
</feature>
<feature type="sequence conflict" description="In Ref. 4; AAI50601/AAI44215." evidence="7" ref="4">
    <original>C</original>
    <variation>R</variation>
    <location>
        <position position="417"/>
    </location>
</feature>
<feature type="sequence conflict" description="In Ref. 3; BAC87511." evidence="7" ref="3">
    <original>E</original>
    <variation>K</variation>
    <location>
        <position position="475"/>
    </location>
</feature>
<feature type="sequence conflict" description="In Ref. 3; BAC04823." evidence="7" ref="3">
    <original>S</original>
    <variation>T</variation>
    <location>
        <position position="823"/>
    </location>
</feature>
<evidence type="ECO:0000255" key="1"/>
<evidence type="ECO:0000256" key="2">
    <source>
        <dbReference type="SAM" id="MobiDB-lite"/>
    </source>
</evidence>
<evidence type="ECO:0000269" key="3">
    <source>
    </source>
</evidence>
<evidence type="ECO:0000269" key="4">
    <source>
    </source>
</evidence>
<evidence type="ECO:0000303" key="5">
    <source>
    </source>
</evidence>
<evidence type="ECO:0000303" key="6">
    <source>
    </source>
</evidence>
<evidence type="ECO:0000305" key="7"/>
<sequence>MNLNTSSNTGDTQRLKIASLDVKQILKNETELDITDNLRKKLHWAKKEKLEITTKHNAELASYESQIAKLRSEVEKGEALRQSLEYDLAVARKEAGLGRRAAEERLAEAHRIQEKLCAQNSELQAKTNETEKAFQTSQQKWKEECRRFEHDLEERDNMIQNCNREYDLLMKEKSRLEKTLQEALEKHQREKNEMESHIRETALEEFRLQEEQWEAERRELQFIVQEQDTAVQNMHKKVEKLETEHMDCSDLLRRQTSELEFSTQREERLRKEFEATTLRVRKLEENIEAERAAHLESKFNSEIIQLRIRDLEGALQVEKASQAEAVADLEIIKNEFKEVESAYEREKHNAQESFAKLNLLEKEYFSKNKKLNEDIEEQKKVIIDLSKRLQYNEKSCSELQEELVMAKKHQAFLVETCENNVKELESILDSFTVSGQWTSGIHKDKDKPPSFSVVLERLRRTLTDYQNKLEDASNEEKACNELDSTKQKIDSHTKNIKELQDKLADVNKELSHLHTKCADREALISTLKVELQNVLHCWEKEKAQAAQSESELQKLSQAFHKDAEEKLTFLHTLYQHLVAGCVLIKQPEGMLDKFSWSELCAVLQENVDALIADLNRANEKIRHLEYICKNKSDTMRELQQTQEDTFTKVAEQIKAQESCWHRQKKELELQYSELFLEVQKRAQKFQEIAEKNMEKLNHIEKSHEQLVLENSHFKKLLSQTQREQMSLLAACALMAGALYPLYSRSCALSTQRDFLQEQVNTFELFKLEIRTLAQALSTVEEKKQEEAKMKKKTFKGLIRIFRKGVIAVLAANRLKILGQSCASLFTWMESFKEGIGMLVCTGEPQDKHKFPKHQKEQLRCLQALSWLTSSDLLAAIISSMAELQDVIGKADPNSRICGHLLIGAAKNSFAKLMDKISLVMECIPLHSSRSITYVEKDSLVQRLAHGLHKVNTLALKYGLRGHVPITKSTASLQKQILGFTQRLHAAEVERRSLRLEVTEFKRSVNEMKKELDKAQGLQMQLNEFKQSKLITHEKFESACEELNNALLREEQAQMLLNEQAQQLQELNYKLELHSSEEADKNQTLGEAVKSLSEAKMELRRKDQSLRQLNRHLTQLEQDKRRLEENIHDAESALRMAAKDKECVANHMRAVENTLHKVRDQISLSWSAASRNDFTLQLPKLHLETFAMEGLKGGPEVVACQAMIKSFMDVYQLASTRIMTLEKEMTSHRSHIAALKSELHTACLRENASLQSIGSRDHSNLSIPSRAPLPADTTGIGDFLPLKAELDTTYTFLKETFINTVPHALTSSHSSPVTMSANANRPTQIGL</sequence>
<reference key="1">
    <citation type="submission" date="2003-09" db="EMBL/GenBank/DDBJ databases">
        <authorList>
            <person name="Huang C.Q."/>
            <person name="Wu S.L."/>
            <person name="Liu S."/>
        </authorList>
    </citation>
    <scope>NUCLEOTIDE SEQUENCE [MRNA] (ISOFORM 1)</scope>
</reference>
<reference key="2">
    <citation type="journal article" date="2004" name="Nature">
        <title>DNA sequence and analysis of human chromosome 9.</title>
        <authorList>
            <person name="Humphray S.J."/>
            <person name="Oliver K."/>
            <person name="Hunt A.R."/>
            <person name="Plumb R.W."/>
            <person name="Loveland J.E."/>
            <person name="Howe K.L."/>
            <person name="Andrews T.D."/>
            <person name="Searle S."/>
            <person name="Hunt S.E."/>
            <person name="Scott C.E."/>
            <person name="Jones M.C."/>
            <person name="Ainscough R."/>
            <person name="Almeida J.P."/>
            <person name="Ambrose K.D."/>
            <person name="Ashwell R.I.S."/>
            <person name="Babbage A.K."/>
            <person name="Babbage S."/>
            <person name="Bagguley C.L."/>
            <person name="Bailey J."/>
            <person name="Banerjee R."/>
            <person name="Barker D.J."/>
            <person name="Barlow K.F."/>
            <person name="Bates K."/>
            <person name="Beasley H."/>
            <person name="Beasley O."/>
            <person name="Bird C.P."/>
            <person name="Bray-Allen S."/>
            <person name="Brown A.J."/>
            <person name="Brown J.Y."/>
            <person name="Burford D."/>
            <person name="Burrill W."/>
            <person name="Burton J."/>
            <person name="Carder C."/>
            <person name="Carter N.P."/>
            <person name="Chapman J.C."/>
            <person name="Chen Y."/>
            <person name="Clarke G."/>
            <person name="Clark S.Y."/>
            <person name="Clee C.M."/>
            <person name="Clegg S."/>
            <person name="Collier R.E."/>
            <person name="Corby N."/>
            <person name="Crosier M."/>
            <person name="Cummings A.T."/>
            <person name="Davies J."/>
            <person name="Dhami P."/>
            <person name="Dunn M."/>
            <person name="Dutta I."/>
            <person name="Dyer L.W."/>
            <person name="Earthrowl M.E."/>
            <person name="Faulkner L."/>
            <person name="Fleming C.J."/>
            <person name="Frankish A."/>
            <person name="Frankland J.A."/>
            <person name="French L."/>
            <person name="Fricker D.G."/>
            <person name="Garner P."/>
            <person name="Garnett J."/>
            <person name="Ghori J."/>
            <person name="Gilbert J.G.R."/>
            <person name="Glison C."/>
            <person name="Grafham D.V."/>
            <person name="Gribble S."/>
            <person name="Griffiths C."/>
            <person name="Griffiths-Jones S."/>
            <person name="Grocock R."/>
            <person name="Guy J."/>
            <person name="Hall R.E."/>
            <person name="Hammond S."/>
            <person name="Harley J.L."/>
            <person name="Harrison E.S.I."/>
            <person name="Hart E.A."/>
            <person name="Heath P.D."/>
            <person name="Henderson C.D."/>
            <person name="Hopkins B.L."/>
            <person name="Howard P.J."/>
            <person name="Howden P.J."/>
            <person name="Huckle E."/>
            <person name="Johnson C."/>
            <person name="Johnson D."/>
            <person name="Joy A.A."/>
            <person name="Kay M."/>
            <person name="Keenan S."/>
            <person name="Kershaw J.K."/>
            <person name="Kimberley A.M."/>
            <person name="King A."/>
            <person name="Knights A."/>
            <person name="Laird G.K."/>
            <person name="Langford C."/>
            <person name="Lawlor S."/>
            <person name="Leongamornlert D.A."/>
            <person name="Leversha M."/>
            <person name="Lloyd C."/>
            <person name="Lloyd D.M."/>
            <person name="Lovell J."/>
            <person name="Martin S."/>
            <person name="Mashreghi-Mohammadi M."/>
            <person name="Matthews L."/>
            <person name="McLaren S."/>
            <person name="McLay K.E."/>
            <person name="McMurray A."/>
            <person name="Milne S."/>
            <person name="Nickerson T."/>
            <person name="Nisbett J."/>
            <person name="Nordsiek G."/>
            <person name="Pearce A.V."/>
            <person name="Peck A.I."/>
            <person name="Porter K.M."/>
            <person name="Pandian R."/>
            <person name="Pelan S."/>
            <person name="Phillimore B."/>
            <person name="Povey S."/>
            <person name="Ramsey Y."/>
            <person name="Rand V."/>
            <person name="Scharfe M."/>
            <person name="Sehra H.K."/>
            <person name="Shownkeen R."/>
            <person name="Sims S.K."/>
            <person name="Skuce C.D."/>
            <person name="Smith M."/>
            <person name="Steward C.A."/>
            <person name="Swarbreck D."/>
            <person name="Sycamore N."/>
            <person name="Tester J."/>
            <person name="Thorpe A."/>
            <person name="Tracey A."/>
            <person name="Tromans A."/>
            <person name="Thomas D.W."/>
            <person name="Wall M."/>
            <person name="Wallis J.M."/>
            <person name="West A.P."/>
            <person name="Whitehead S.L."/>
            <person name="Willey D.L."/>
            <person name="Williams S.A."/>
            <person name="Wilming L."/>
            <person name="Wray P.W."/>
            <person name="Young L."/>
            <person name="Ashurst J.L."/>
            <person name="Coulson A."/>
            <person name="Blocker H."/>
            <person name="Durbin R.M."/>
            <person name="Sulston J.E."/>
            <person name="Hubbard T."/>
            <person name="Jackson M.J."/>
            <person name="Bentley D.R."/>
            <person name="Beck S."/>
            <person name="Rogers J."/>
            <person name="Dunham I."/>
        </authorList>
    </citation>
    <scope>NUCLEOTIDE SEQUENCE [LARGE SCALE GENOMIC DNA]</scope>
</reference>
<reference key="3">
    <citation type="journal article" date="2004" name="Nat. Genet.">
        <title>Complete sequencing and characterization of 21,243 full-length human cDNAs.</title>
        <authorList>
            <person name="Ota T."/>
            <person name="Suzuki Y."/>
            <person name="Nishikawa T."/>
            <person name="Otsuki T."/>
            <person name="Sugiyama T."/>
            <person name="Irie R."/>
            <person name="Wakamatsu A."/>
            <person name="Hayashi K."/>
            <person name="Sato H."/>
            <person name="Nagai K."/>
            <person name="Kimura K."/>
            <person name="Makita H."/>
            <person name="Sekine M."/>
            <person name="Obayashi M."/>
            <person name="Nishi T."/>
            <person name="Shibahara T."/>
            <person name="Tanaka T."/>
            <person name="Ishii S."/>
            <person name="Yamamoto J."/>
            <person name="Saito K."/>
            <person name="Kawai Y."/>
            <person name="Isono Y."/>
            <person name="Nakamura Y."/>
            <person name="Nagahari K."/>
            <person name="Murakami K."/>
            <person name="Yasuda T."/>
            <person name="Iwayanagi T."/>
            <person name="Wagatsuma M."/>
            <person name="Shiratori A."/>
            <person name="Sudo H."/>
            <person name="Hosoiri T."/>
            <person name="Kaku Y."/>
            <person name="Kodaira H."/>
            <person name="Kondo H."/>
            <person name="Sugawara M."/>
            <person name="Takahashi M."/>
            <person name="Kanda K."/>
            <person name="Yokoi T."/>
            <person name="Furuya T."/>
            <person name="Kikkawa E."/>
            <person name="Omura Y."/>
            <person name="Abe K."/>
            <person name="Kamihara K."/>
            <person name="Katsuta N."/>
            <person name="Sato K."/>
            <person name="Tanikawa M."/>
            <person name="Yamazaki M."/>
            <person name="Ninomiya K."/>
            <person name="Ishibashi T."/>
            <person name="Yamashita H."/>
            <person name="Murakawa K."/>
            <person name="Fujimori K."/>
            <person name="Tanai H."/>
            <person name="Kimata M."/>
            <person name="Watanabe M."/>
            <person name="Hiraoka S."/>
            <person name="Chiba Y."/>
            <person name="Ishida S."/>
            <person name="Ono Y."/>
            <person name="Takiguchi S."/>
            <person name="Watanabe S."/>
            <person name="Yosida M."/>
            <person name="Hotuta T."/>
            <person name="Kusano J."/>
            <person name="Kanehori K."/>
            <person name="Takahashi-Fujii A."/>
            <person name="Hara H."/>
            <person name="Tanase T.-O."/>
            <person name="Nomura Y."/>
            <person name="Togiya S."/>
            <person name="Komai F."/>
            <person name="Hara R."/>
            <person name="Takeuchi K."/>
            <person name="Arita M."/>
            <person name="Imose N."/>
            <person name="Musashino K."/>
            <person name="Yuuki H."/>
            <person name="Oshima A."/>
            <person name="Sasaki N."/>
            <person name="Aotsuka S."/>
            <person name="Yoshikawa Y."/>
            <person name="Matsunawa H."/>
            <person name="Ichihara T."/>
            <person name="Shiohata N."/>
            <person name="Sano S."/>
            <person name="Moriya S."/>
            <person name="Momiyama H."/>
            <person name="Satoh N."/>
            <person name="Takami S."/>
            <person name="Terashima Y."/>
            <person name="Suzuki O."/>
            <person name="Nakagawa S."/>
            <person name="Senoh A."/>
            <person name="Mizoguchi H."/>
            <person name="Goto Y."/>
            <person name="Shimizu F."/>
            <person name="Wakebe H."/>
            <person name="Hishigaki H."/>
            <person name="Watanabe T."/>
            <person name="Sugiyama A."/>
            <person name="Takemoto M."/>
            <person name="Kawakami B."/>
            <person name="Yamazaki M."/>
            <person name="Watanabe K."/>
            <person name="Kumagai A."/>
            <person name="Itakura S."/>
            <person name="Fukuzumi Y."/>
            <person name="Fujimori Y."/>
            <person name="Komiyama M."/>
            <person name="Tashiro H."/>
            <person name="Tanigami A."/>
            <person name="Fujiwara T."/>
            <person name="Ono T."/>
            <person name="Yamada K."/>
            <person name="Fujii Y."/>
            <person name="Ozaki K."/>
            <person name="Hirao M."/>
            <person name="Ohmori Y."/>
            <person name="Kawabata A."/>
            <person name="Hikiji T."/>
            <person name="Kobatake N."/>
            <person name="Inagaki H."/>
            <person name="Ikema Y."/>
            <person name="Okamoto S."/>
            <person name="Okitani R."/>
            <person name="Kawakami T."/>
            <person name="Noguchi S."/>
            <person name="Itoh T."/>
            <person name="Shigeta K."/>
            <person name="Senba T."/>
            <person name="Matsumura K."/>
            <person name="Nakajima Y."/>
            <person name="Mizuno T."/>
            <person name="Morinaga M."/>
            <person name="Sasaki M."/>
            <person name="Togashi T."/>
            <person name="Oyama M."/>
            <person name="Hata H."/>
            <person name="Watanabe M."/>
            <person name="Komatsu T."/>
            <person name="Mizushima-Sugano J."/>
            <person name="Satoh T."/>
            <person name="Shirai Y."/>
            <person name="Takahashi Y."/>
            <person name="Nakagawa K."/>
            <person name="Okumura K."/>
            <person name="Nagase T."/>
            <person name="Nomura N."/>
            <person name="Kikuchi H."/>
            <person name="Masuho Y."/>
            <person name="Yamashita R."/>
            <person name="Nakai K."/>
            <person name="Yada T."/>
            <person name="Nakamura Y."/>
            <person name="Ohara O."/>
            <person name="Isogai T."/>
            <person name="Sugano S."/>
        </authorList>
    </citation>
    <scope>NUCLEOTIDE SEQUENCE [LARGE SCALE MRNA] OF 475-1326 (ISOFORM 1)</scope>
    <scope>NUCLEOTIDE SEQUENCE [LARGE SCALE MRNA] OF 752-1326 (ISOFORM 2)</scope>
    <scope>VARIANT ARG-1069</scope>
    <source>
        <tissue>Brain cortex</tissue>
        <tissue>Fetal brain</tissue>
        <tissue>Trachea</tissue>
    </source>
</reference>
<reference key="4">
    <citation type="journal article" date="2004" name="Genome Res.">
        <title>The status, quality, and expansion of the NIH full-length cDNA project: the Mammalian Gene Collection (MGC).</title>
        <authorList>
            <consortium name="The MGC Project Team"/>
        </authorList>
    </citation>
    <scope>NUCLEOTIDE SEQUENCE [LARGE SCALE MRNA] (ISOFORM 3)</scope>
    <scope>NUCLEOTIDE SEQUENCE [LARGE SCALE MRNA] OF 494-1326 (ISOFORM 1)</scope>
    <scope>NUCLEOTIDE SEQUENCE [LARGE SCALE MRNA] OF 805-1203 (ISOFORM 2)</scope>
    <scope>VARIANTS ASN-17 AND ARG-1069</scope>
    <source>
        <tissue>Lung</tissue>
        <tissue>Testis</tissue>
    </source>
</reference>
<comment type="alternative products">
    <event type="alternative splicing"/>
    <isoform>
        <id>Q6TFL3-1</id>
        <name>1</name>
        <sequence type="displayed"/>
    </isoform>
    <isoform>
        <id>Q6TFL3-3</id>
        <name>2</name>
        <sequence type="described" ref="VSP_014445 VSP_014446"/>
    </isoform>
    <isoform>
        <id>Q6TFL3-4</id>
        <name>3</name>
        <sequence type="described" ref="VSP_043768"/>
    </isoform>
</comment>
<comment type="sequence caution" evidence="7">
    <conflict type="erroneous initiation">
        <sequence resource="EMBL-CDS" id="BAC04370"/>
    </conflict>
    <text>Truncated N-terminus.</text>
</comment>
<comment type="sequence caution" evidence="7">
    <conflict type="erroneous initiation">
        <sequence resource="EMBL-CDS" id="BAC04823"/>
    </conflict>
    <text>Truncated N-terminus.</text>
</comment>
<comment type="sequence caution" evidence="7">
    <conflict type="erroneous initiation">
        <sequence resource="EMBL-CDS" id="BAC87511"/>
    </conflict>
    <text>Truncated N-terminus.</text>
</comment>
<proteinExistence type="evidence at protein level"/>